<reference key="1">
    <citation type="journal article" date="2002" name="Nucleic Acids Res.">
        <title>Genome sequence of Shigella flexneri 2a: insights into pathogenicity through comparison with genomes of Escherichia coli K12 and O157.</title>
        <authorList>
            <person name="Jin Q."/>
            <person name="Yuan Z."/>
            <person name="Xu J."/>
            <person name="Wang Y."/>
            <person name="Shen Y."/>
            <person name="Lu W."/>
            <person name="Wang J."/>
            <person name="Liu H."/>
            <person name="Yang J."/>
            <person name="Yang F."/>
            <person name="Zhang X."/>
            <person name="Zhang J."/>
            <person name="Yang G."/>
            <person name="Wu H."/>
            <person name="Qu D."/>
            <person name="Dong J."/>
            <person name="Sun L."/>
            <person name="Xue Y."/>
            <person name="Zhao A."/>
            <person name="Gao Y."/>
            <person name="Zhu J."/>
            <person name="Kan B."/>
            <person name="Ding K."/>
            <person name="Chen S."/>
            <person name="Cheng H."/>
            <person name="Yao Z."/>
            <person name="He B."/>
            <person name="Chen R."/>
            <person name="Ma D."/>
            <person name="Qiang B."/>
            <person name="Wen Y."/>
            <person name="Hou Y."/>
            <person name="Yu J."/>
        </authorList>
    </citation>
    <scope>NUCLEOTIDE SEQUENCE [LARGE SCALE GENOMIC DNA]</scope>
    <source>
        <strain>301 / Serotype 2a</strain>
    </source>
</reference>
<reference key="2">
    <citation type="journal article" date="2003" name="Infect. Immun.">
        <title>Complete genome sequence and comparative genomics of Shigella flexneri serotype 2a strain 2457T.</title>
        <authorList>
            <person name="Wei J."/>
            <person name="Goldberg M.B."/>
            <person name="Burland V."/>
            <person name="Venkatesan M.M."/>
            <person name="Deng W."/>
            <person name="Fournier G."/>
            <person name="Mayhew G.F."/>
            <person name="Plunkett G. III"/>
            <person name="Rose D.J."/>
            <person name="Darling A."/>
            <person name="Mau B."/>
            <person name="Perna N.T."/>
            <person name="Payne S.M."/>
            <person name="Runyen-Janecky L.J."/>
            <person name="Zhou S."/>
            <person name="Schwartz D.C."/>
            <person name="Blattner F.R."/>
        </authorList>
    </citation>
    <scope>NUCLEOTIDE SEQUENCE [LARGE SCALE GENOMIC DNA]</scope>
    <source>
        <strain>ATCC 700930 / 2457T / Serotype 2a</strain>
    </source>
</reference>
<evidence type="ECO:0000255" key="1">
    <source>
        <dbReference type="HAMAP-Rule" id="MF_00044"/>
    </source>
</evidence>
<evidence type="ECO:0000305" key="2"/>
<sequence length="590" mass="65812">MRTEYCGQLRLSHVGQQVTLCGWVNRRRDLGSLIFIDMRDREGIVQVFFDPDRADALKLASELRNEFCIQVTGTVRARDEKNINRDMATGEIEVLASSLTIINRADVLPLDSNHVNTEEARLKYRYLDLRRPEMAQRLKTRAKITSLVRRFMDDHGFLDIETPMLTKATPEGARDYLVPSRVHKGKFYALPQSPQLFKQLLMMSGFDRYYQIVKCFRDEDLRADRQPEFTQIDVETSFMTAPQVREVMEALVRHLWLEVKGVDLGDFPVMTFAEAERRYGSDKPDLRNPMELTDVADLLKSVEFAVFAGPANDPKGRVAALRVPGGASLTRKQIDEYGNFVKIYGAKGLAYIKVNERAKGLEGINSPVAKFLNAEIIEAILDRTAAQDGDMIFFGADNKKIVADGMGALLLKVGKDLGLTDESKWAPLWVIDFPMFEDDGEGGLTAMHHPFTSPKDMTAAELKAAPENAVANAYDMVINGYEVGGGSVRIHNGDMQQTVFGILGINEEEQREKFGFLLDALKYGTPPHAGLAFGLDRLTMLLTGTDNIRDVIAFPKTTAAACLMTEAPSFANPTALAELSIQVVKKAENN</sequence>
<organism>
    <name type="scientific">Shigella flexneri</name>
    <dbReference type="NCBI Taxonomy" id="623"/>
    <lineage>
        <taxon>Bacteria</taxon>
        <taxon>Pseudomonadati</taxon>
        <taxon>Pseudomonadota</taxon>
        <taxon>Gammaproteobacteria</taxon>
        <taxon>Enterobacterales</taxon>
        <taxon>Enterobacteriaceae</taxon>
        <taxon>Shigella</taxon>
    </lineage>
</organism>
<feature type="chain" id="PRO_0000110939" description="Aspartate--tRNA ligase">
    <location>
        <begin position="1"/>
        <end position="590"/>
    </location>
</feature>
<feature type="region of interest" description="Aspartate" evidence="1">
    <location>
        <begin position="195"/>
        <end position="198"/>
    </location>
</feature>
<feature type="binding site" evidence="1">
    <location>
        <position position="171"/>
    </location>
    <ligand>
        <name>L-aspartate</name>
        <dbReference type="ChEBI" id="CHEBI:29991"/>
    </ligand>
</feature>
<feature type="binding site" evidence="1">
    <location>
        <begin position="217"/>
        <end position="219"/>
    </location>
    <ligand>
        <name>ATP</name>
        <dbReference type="ChEBI" id="CHEBI:30616"/>
    </ligand>
</feature>
<feature type="binding site" evidence="1">
    <location>
        <position position="217"/>
    </location>
    <ligand>
        <name>L-aspartate</name>
        <dbReference type="ChEBI" id="CHEBI:29991"/>
    </ligand>
</feature>
<feature type="binding site" evidence="1">
    <location>
        <position position="226"/>
    </location>
    <ligand>
        <name>ATP</name>
        <dbReference type="ChEBI" id="CHEBI:30616"/>
    </ligand>
</feature>
<feature type="binding site" evidence="1">
    <location>
        <position position="448"/>
    </location>
    <ligand>
        <name>L-aspartate</name>
        <dbReference type="ChEBI" id="CHEBI:29991"/>
    </ligand>
</feature>
<feature type="binding site" evidence="1">
    <location>
        <position position="482"/>
    </location>
    <ligand>
        <name>ATP</name>
        <dbReference type="ChEBI" id="CHEBI:30616"/>
    </ligand>
</feature>
<feature type="binding site" evidence="1">
    <location>
        <position position="489"/>
    </location>
    <ligand>
        <name>L-aspartate</name>
        <dbReference type="ChEBI" id="CHEBI:29991"/>
    </ligand>
</feature>
<feature type="binding site" evidence="1">
    <location>
        <begin position="534"/>
        <end position="537"/>
    </location>
    <ligand>
        <name>ATP</name>
        <dbReference type="ChEBI" id="CHEBI:30616"/>
    </ligand>
</feature>
<feature type="sequence conflict" description="In Ref. 2; AAP17256." evidence="2" ref="2">
    <original>FE</original>
    <variation>LG</variation>
    <location>
        <begin position="436"/>
        <end position="437"/>
    </location>
</feature>
<name>SYD_SHIFL</name>
<keyword id="KW-0030">Aminoacyl-tRNA synthetase</keyword>
<keyword id="KW-0067">ATP-binding</keyword>
<keyword id="KW-0963">Cytoplasm</keyword>
<keyword id="KW-0436">Ligase</keyword>
<keyword id="KW-0547">Nucleotide-binding</keyword>
<keyword id="KW-0648">Protein biosynthesis</keyword>
<keyword id="KW-1185">Reference proteome</keyword>
<protein>
    <recommendedName>
        <fullName evidence="1">Aspartate--tRNA ligase</fullName>
        <ecNumber evidence="1">6.1.1.12</ecNumber>
    </recommendedName>
    <alternativeName>
        <fullName evidence="1">Aspartyl-tRNA synthetase</fullName>
        <shortName evidence="1">AspRS</shortName>
    </alternativeName>
</protein>
<proteinExistence type="inferred from homology"/>
<dbReference type="EC" id="6.1.1.12" evidence="1"/>
<dbReference type="EMBL" id="AE005674">
    <property type="protein sequence ID" value="AAN43432.1"/>
    <property type="molecule type" value="Genomic_DNA"/>
</dbReference>
<dbReference type="EMBL" id="AE014073">
    <property type="protein sequence ID" value="AAP17256.1"/>
    <property type="molecule type" value="Genomic_DNA"/>
</dbReference>
<dbReference type="RefSeq" id="NP_707725.1">
    <property type="nucleotide sequence ID" value="NC_004337.2"/>
</dbReference>
<dbReference type="RefSeq" id="WP_001258670.1">
    <property type="nucleotide sequence ID" value="NZ_WPGW01000041.1"/>
</dbReference>
<dbReference type="SMR" id="Q7UAE6"/>
<dbReference type="STRING" id="198214.SF1876"/>
<dbReference type="PaxDb" id="198214-SF1876"/>
<dbReference type="GeneID" id="1025025"/>
<dbReference type="KEGG" id="sfl:SF1876"/>
<dbReference type="KEGG" id="sfx:S1942"/>
<dbReference type="PATRIC" id="fig|198214.7.peg.2236"/>
<dbReference type="HOGENOM" id="CLU_014330_3_2_6"/>
<dbReference type="Proteomes" id="UP000001006">
    <property type="component" value="Chromosome"/>
</dbReference>
<dbReference type="Proteomes" id="UP000002673">
    <property type="component" value="Chromosome"/>
</dbReference>
<dbReference type="GO" id="GO:0005737">
    <property type="term" value="C:cytoplasm"/>
    <property type="evidence" value="ECO:0007669"/>
    <property type="project" value="UniProtKB-SubCell"/>
</dbReference>
<dbReference type="GO" id="GO:0004815">
    <property type="term" value="F:aspartate-tRNA ligase activity"/>
    <property type="evidence" value="ECO:0007669"/>
    <property type="project" value="UniProtKB-UniRule"/>
</dbReference>
<dbReference type="GO" id="GO:0005524">
    <property type="term" value="F:ATP binding"/>
    <property type="evidence" value="ECO:0007669"/>
    <property type="project" value="UniProtKB-UniRule"/>
</dbReference>
<dbReference type="GO" id="GO:0003676">
    <property type="term" value="F:nucleic acid binding"/>
    <property type="evidence" value="ECO:0007669"/>
    <property type="project" value="InterPro"/>
</dbReference>
<dbReference type="GO" id="GO:0006422">
    <property type="term" value="P:aspartyl-tRNA aminoacylation"/>
    <property type="evidence" value="ECO:0007669"/>
    <property type="project" value="UniProtKB-UniRule"/>
</dbReference>
<dbReference type="CDD" id="cd00777">
    <property type="entry name" value="AspRS_core"/>
    <property type="match status" value="1"/>
</dbReference>
<dbReference type="CDD" id="cd04317">
    <property type="entry name" value="EcAspRS_like_N"/>
    <property type="match status" value="1"/>
</dbReference>
<dbReference type="FunFam" id="2.40.50.140:FF:000080">
    <property type="entry name" value="Aspartate--tRNA ligase"/>
    <property type="match status" value="1"/>
</dbReference>
<dbReference type="FunFam" id="3.30.1360.30:FF:000001">
    <property type="entry name" value="Aspartate--tRNA ligase"/>
    <property type="match status" value="1"/>
</dbReference>
<dbReference type="Gene3D" id="3.30.930.10">
    <property type="entry name" value="Bira Bifunctional Protein, Domain 2"/>
    <property type="match status" value="1"/>
</dbReference>
<dbReference type="Gene3D" id="3.30.1360.30">
    <property type="entry name" value="GAD-like domain"/>
    <property type="match status" value="1"/>
</dbReference>
<dbReference type="Gene3D" id="2.40.50.140">
    <property type="entry name" value="Nucleic acid-binding proteins"/>
    <property type="match status" value="1"/>
</dbReference>
<dbReference type="HAMAP" id="MF_00044">
    <property type="entry name" value="Asp_tRNA_synth_type1"/>
    <property type="match status" value="1"/>
</dbReference>
<dbReference type="InterPro" id="IPR004364">
    <property type="entry name" value="Aa-tRNA-synt_II"/>
</dbReference>
<dbReference type="InterPro" id="IPR006195">
    <property type="entry name" value="aa-tRNA-synth_II"/>
</dbReference>
<dbReference type="InterPro" id="IPR045864">
    <property type="entry name" value="aa-tRNA-synth_II/BPL/LPL"/>
</dbReference>
<dbReference type="InterPro" id="IPR004524">
    <property type="entry name" value="Asp-tRNA-ligase_1"/>
</dbReference>
<dbReference type="InterPro" id="IPR047089">
    <property type="entry name" value="Asp-tRNA-ligase_1_N"/>
</dbReference>
<dbReference type="InterPro" id="IPR002312">
    <property type="entry name" value="Asp/Asn-tRNA-synth_IIb"/>
</dbReference>
<dbReference type="InterPro" id="IPR047090">
    <property type="entry name" value="AspRS_core"/>
</dbReference>
<dbReference type="InterPro" id="IPR004115">
    <property type="entry name" value="GAD-like_sf"/>
</dbReference>
<dbReference type="InterPro" id="IPR029351">
    <property type="entry name" value="GAD_dom"/>
</dbReference>
<dbReference type="InterPro" id="IPR012340">
    <property type="entry name" value="NA-bd_OB-fold"/>
</dbReference>
<dbReference type="InterPro" id="IPR004365">
    <property type="entry name" value="NA-bd_OB_tRNA"/>
</dbReference>
<dbReference type="NCBIfam" id="TIGR00459">
    <property type="entry name" value="aspS_bact"/>
    <property type="match status" value="1"/>
</dbReference>
<dbReference type="NCBIfam" id="NF001750">
    <property type="entry name" value="PRK00476.1"/>
    <property type="match status" value="1"/>
</dbReference>
<dbReference type="PANTHER" id="PTHR22594:SF5">
    <property type="entry name" value="ASPARTATE--TRNA LIGASE, MITOCHONDRIAL"/>
    <property type="match status" value="1"/>
</dbReference>
<dbReference type="PANTHER" id="PTHR22594">
    <property type="entry name" value="ASPARTYL/LYSYL-TRNA SYNTHETASE"/>
    <property type="match status" value="1"/>
</dbReference>
<dbReference type="Pfam" id="PF02938">
    <property type="entry name" value="GAD"/>
    <property type="match status" value="1"/>
</dbReference>
<dbReference type="Pfam" id="PF00152">
    <property type="entry name" value="tRNA-synt_2"/>
    <property type="match status" value="1"/>
</dbReference>
<dbReference type="Pfam" id="PF01336">
    <property type="entry name" value="tRNA_anti-codon"/>
    <property type="match status" value="1"/>
</dbReference>
<dbReference type="PRINTS" id="PR01042">
    <property type="entry name" value="TRNASYNTHASP"/>
</dbReference>
<dbReference type="SUPFAM" id="SSF55681">
    <property type="entry name" value="Class II aaRS and biotin synthetases"/>
    <property type="match status" value="1"/>
</dbReference>
<dbReference type="SUPFAM" id="SSF55261">
    <property type="entry name" value="GAD domain-like"/>
    <property type="match status" value="1"/>
</dbReference>
<dbReference type="SUPFAM" id="SSF50249">
    <property type="entry name" value="Nucleic acid-binding proteins"/>
    <property type="match status" value="1"/>
</dbReference>
<dbReference type="PROSITE" id="PS50862">
    <property type="entry name" value="AA_TRNA_LIGASE_II"/>
    <property type="match status" value="1"/>
</dbReference>
<accession>Q7UAE6</accession>
<accession>Q83KR2</accession>
<gene>
    <name evidence="1" type="primary">aspS</name>
    <name type="ordered locus">SF1876</name>
    <name type="ordered locus">S1942</name>
</gene>
<comment type="function">
    <text evidence="1">Catalyzes the attachment of L-aspartate to tRNA(Asp) in a two-step reaction: L-aspartate is first activated by ATP to form Asp-AMP and then transferred to the acceptor end of tRNA(Asp).</text>
</comment>
<comment type="catalytic activity">
    <reaction evidence="1">
        <text>tRNA(Asp) + L-aspartate + ATP = L-aspartyl-tRNA(Asp) + AMP + diphosphate</text>
        <dbReference type="Rhea" id="RHEA:19649"/>
        <dbReference type="Rhea" id="RHEA-COMP:9660"/>
        <dbReference type="Rhea" id="RHEA-COMP:9678"/>
        <dbReference type="ChEBI" id="CHEBI:29991"/>
        <dbReference type="ChEBI" id="CHEBI:30616"/>
        <dbReference type="ChEBI" id="CHEBI:33019"/>
        <dbReference type="ChEBI" id="CHEBI:78442"/>
        <dbReference type="ChEBI" id="CHEBI:78516"/>
        <dbReference type="ChEBI" id="CHEBI:456215"/>
        <dbReference type="EC" id="6.1.1.12"/>
    </reaction>
</comment>
<comment type="subunit">
    <text evidence="1">Homodimer.</text>
</comment>
<comment type="subcellular location">
    <subcellularLocation>
        <location evidence="1">Cytoplasm</location>
    </subcellularLocation>
</comment>
<comment type="similarity">
    <text evidence="1">Belongs to the class-II aminoacyl-tRNA synthetase family. Type 1 subfamily.</text>
</comment>